<sequence>MARIAGVNIPTAKRVVIALQYIHGIGPKKAEEITEKVGIPAERRVNQLTDAEVLQIRETIDRDYLVEGDLRREVSMNIKRLMDLGCYRGLRHRKQLPVRGQRTHTNARTRKGKAKPIAGKKK</sequence>
<comment type="function">
    <text evidence="1">Located at the top of the head of the 30S subunit, it contacts several helices of the 16S rRNA. In the 70S ribosome it contacts the 23S rRNA (bridge B1a) and protein L5 of the 50S subunit (bridge B1b), connecting the 2 subunits; these bridges are implicated in subunit movement. Contacts the tRNAs in the A and P-sites.</text>
</comment>
<comment type="subunit">
    <text evidence="1">Part of the 30S ribosomal subunit. Forms a loose heterodimer with protein S19. Forms two bridges to the 50S subunit in the 70S ribosome.</text>
</comment>
<comment type="similarity">
    <text evidence="1">Belongs to the universal ribosomal protein uS13 family.</text>
</comment>
<protein>
    <recommendedName>
        <fullName evidence="1">Small ribosomal subunit protein uS13</fullName>
    </recommendedName>
    <alternativeName>
        <fullName evidence="3">30S ribosomal protein S13</fullName>
    </alternativeName>
</protein>
<name>RS13_METPB</name>
<organism>
    <name type="scientific">Methylorubrum populi (strain ATCC BAA-705 / NCIMB 13946 / BJ001)</name>
    <name type="common">Methylobacterium populi</name>
    <dbReference type="NCBI Taxonomy" id="441620"/>
    <lineage>
        <taxon>Bacteria</taxon>
        <taxon>Pseudomonadati</taxon>
        <taxon>Pseudomonadota</taxon>
        <taxon>Alphaproteobacteria</taxon>
        <taxon>Hyphomicrobiales</taxon>
        <taxon>Methylobacteriaceae</taxon>
        <taxon>Methylorubrum</taxon>
    </lineage>
</organism>
<accession>B1Z771</accession>
<gene>
    <name evidence="1" type="primary">rpsM</name>
    <name type="ordered locus">Mpop_2142</name>
</gene>
<dbReference type="EMBL" id="CP001029">
    <property type="protein sequence ID" value="ACB80304.1"/>
    <property type="molecule type" value="Genomic_DNA"/>
</dbReference>
<dbReference type="RefSeq" id="WP_012454040.1">
    <property type="nucleotide sequence ID" value="NC_010725.1"/>
</dbReference>
<dbReference type="SMR" id="B1Z771"/>
<dbReference type="STRING" id="441620.Mpop_2142"/>
<dbReference type="KEGG" id="mpo:Mpop_2142"/>
<dbReference type="eggNOG" id="COG0099">
    <property type="taxonomic scope" value="Bacteria"/>
</dbReference>
<dbReference type="HOGENOM" id="CLU_103849_1_2_5"/>
<dbReference type="OrthoDB" id="9803610at2"/>
<dbReference type="Proteomes" id="UP000007136">
    <property type="component" value="Chromosome"/>
</dbReference>
<dbReference type="GO" id="GO:0005829">
    <property type="term" value="C:cytosol"/>
    <property type="evidence" value="ECO:0007669"/>
    <property type="project" value="TreeGrafter"/>
</dbReference>
<dbReference type="GO" id="GO:0015935">
    <property type="term" value="C:small ribosomal subunit"/>
    <property type="evidence" value="ECO:0007669"/>
    <property type="project" value="TreeGrafter"/>
</dbReference>
<dbReference type="GO" id="GO:0019843">
    <property type="term" value="F:rRNA binding"/>
    <property type="evidence" value="ECO:0007669"/>
    <property type="project" value="UniProtKB-UniRule"/>
</dbReference>
<dbReference type="GO" id="GO:0003735">
    <property type="term" value="F:structural constituent of ribosome"/>
    <property type="evidence" value="ECO:0007669"/>
    <property type="project" value="InterPro"/>
</dbReference>
<dbReference type="GO" id="GO:0000049">
    <property type="term" value="F:tRNA binding"/>
    <property type="evidence" value="ECO:0007669"/>
    <property type="project" value="UniProtKB-UniRule"/>
</dbReference>
<dbReference type="GO" id="GO:0006412">
    <property type="term" value="P:translation"/>
    <property type="evidence" value="ECO:0007669"/>
    <property type="project" value="UniProtKB-UniRule"/>
</dbReference>
<dbReference type="FunFam" id="1.10.8.50:FF:000001">
    <property type="entry name" value="30S ribosomal protein S13"/>
    <property type="match status" value="1"/>
</dbReference>
<dbReference type="FunFam" id="4.10.910.10:FF:000001">
    <property type="entry name" value="30S ribosomal protein S13"/>
    <property type="match status" value="1"/>
</dbReference>
<dbReference type="Gene3D" id="1.10.8.50">
    <property type="match status" value="1"/>
</dbReference>
<dbReference type="Gene3D" id="4.10.910.10">
    <property type="entry name" value="30s ribosomal protein s13, domain 2"/>
    <property type="match status" value="1"/>
</dbReference>
<dbReference type="HAMAP" id="MF_01315">
    <property type="entry name" value="Ribosomal_uS13"/>
    <property type="match status" value="1"/>
</dbReference>
<dbReference type="InterPro" id="IPR027437">
    <property type="entry name" value="Rbsml_uS13_C"/>
</dbReference>
<dbReference type="InterPro" id="IPR001892">
    <property type="entry name" value="Ribosomal_uS13"/>
</dbReference>
<dbReference type="InterPro" id="IPR010979">
    <property type="entry name" value="Ribosomal_uS13-like_H2TH"/>
</dbReference>
<dbReference type="InterPro" id="IPR019980">
    <property type="entry name" value="Ribosomal_uS13_bac-type"/>
</dbReference>
<dbReference type="NCBIfam" id="TIGR03631">
    <property type="entry name" value="uS13_bact"/>
    <property type="match status" value="1"/>
</dbReference>
<dbReference type="PANTHER" id="PTHR10871">
    <property type="entry name" value="30S RIBOSOMAL PROTEIN S13/40S RIBOSOMAL PROTEIN S18"/>
    <property type="match status" value="1"/>
</dbReference>
<dbReference type="PANTHER" id="PTHR10871:SF1">
    <property type="entry name" value="SMALL RIBOSOMAL SUBUNIT PROTEIN US13M"/>
    <property type="match status" value="1"/>
</dbReference>
<dbReference type="Pfam" id="PF00416">
    <property type="entry name" value="Ribosomal_S13"/>
    <property type="match status" value="1"/>
</dbReference>
<dbReference type="PIRSF" id="PIRSF002134">
    <property type="entry name" value="Ribosomal_S13"/>
    <property type="match status" value="1"/>
</dbReference>
<dbReference type="SUPFAM" id="SSF46946">
    <property type="entry name" value="S13-like H2TH domain"/>
    <property type="match status" value="1"/>
</dbReference>
<dbReference type="PROSITE" id="PS50159">
    <property type="entry name" value="RIBOSOMAL_S13_2"/>
    <property type="match status" value="1"/>
</dbReference>
<reference key="1">
    <citation type="submission" date="2008-04" db="EMBL/GenBank/DDBJ databases">
        <title>Complete sequence of chromosome of Methylobacterium populi BJ001.</title>
        <authorList>
            <consortium name="US DOE Joint Genome Institute"/>
            <person name="Copeland A."/>
            <person name="Lucas S."/>
            <person name="Lapidus A."/>
            <person name="Glavina del Rio T."/>
            <person name="Dalin E."/>
            <person name="Tice H."/>
            <person name="Bruce D."/>
            <person name="Goodwin L."/>
            <person name="Pitluck S."/>
            <person name="Chertkov O."/>
            <person name="Brettin T."/>
            <person name="Detter J.C."/>
            <person name="Han C."/>
            <person name="Kuske C.R."/>
            <person name="Schmutz J."/>
            <person name="Larimer F."/>
            <person name="Land M."/>
            <person name="Hauser L."/>
            <person name="Kyrpides N."/>
            <person name="Mikhailova N."/>
            <person name="Marx C."/>
            <person name="Richardson P."/>
        </authorList>
    </citation>
    <scope>NUCLEOTIDE SEQUENCE [LARGE SCALE GENOMIC DNA]</scope>
    <source>
        <strain>ATCC BAA-705 / NCIMB 13946 / BJ001</strain>
    </source>
</reference>
<feature type="chain" id="PRO_1000141286" description="Small ribosomal subunit protein uS13">
    <location>
        <begin position="1"/>
        <end position="122"/>
    </location>
</feature>
<feature type="region of interest" description="Disordered" evidence="2">
    <location>
        <begin position="94"/>
        <end position="122"/>
    </location>
</feature>
<proteinExistence type="inferred from homology"/>
<keyword id="KW-0687">Ribonucleoprotein</keyword>
<keyword id="KW-0689">Ribosomal protein</keyword>
<keyword id="KW-0694">RNA-binding</keyword>
<keyword id="KW-0699">rRNA-binding</keyword>
<keyword id="KW-0820">tRNA-binding</keyword>
<evidence type="ECO:0000255" key="1">
    <source>
        <dbReference type="HAMAP-Rule" id="MF_01315"/>
    </source>
</evidence>
<evidence type="ECO:0000256" key="2">
    <source>
        <dbReference type="SAM" id="MobiDB-lite"/>
    </source>
</evidence>
<evidence type="ECO:0000305" key="3"/>